<gene>
    <name type="primary">CHRNA6</name>
</gene>
<feature type="signal peptide" evidence="5">
    <location>
        <begin position="1"/>
        <end position="31"/>
    </location>
</feature>
<feature type="chain" id="PRO_0000000364" description="Neuronal acetylcholine receptor subunit alpha-6">
    <location>
        <begin position="32"/>
        <end position="494"/>
    </location>
</feature>
<feature type="topological domain" description="Extracellular" evidence="5">
    <location>
        <begin position="32"/>
        <end position="240"/>
    </location>
</feature>
<feature type="transmembrane region" description="Helical" evidence="5">
    <location>
        <begin position="241"/>
        <end position="265"/>
    </location>
</feature>
<feature type="transmembrane region" description="Helical" evidence="5">
    <location>
        <begin position="272"/>
        <end position="290"/>
    </location>
</feature>
<feature type="transmembrane region" description="Helical" evidence="5">
    <location>
        <begin position="306"/>
        <end position="327"/>
    </location>
</feature>
<feature type="topological domain" description="Cytoplasmic" evidence="5">
    <location>
        <begin position="328"/>
        <end position="468"/>
    </location>
</feature>
<feature type="transmembrane region" description="Helical" evidence="5">
    <location>
        <begin position="469"/>
        <end position="489"/>
    </location>
</feature>
<feature type="region of interest" description="Disordered" evidence="6">
    <location>
        <begin position="364"/>
        <end position="390"/>
    </location>
</feature>
<feature type="compositionally biased region" description="Basic residues" evidence="6">
    <location>
        <begin position="366"/>
        <end position="390"/>
    </location>
</feature>
<feature type="glycosylation site" description="N-linked (GlcNAc...) asparagine" evidence="5">
    <location>
        <position position="54"/>
    </location>
</feature>
<feature type="glycosylation site" description="N-linked (GlcNAc...) asparagine" evidence="5">
    <location>
        <position position="171"/>
    </location>
</feature>
<feature type="disulfide bond" evidence="1">
    <location>
        <begin position="158"/>
        <end position="172"/>
    </location>
</feature>
<feature type="sequence conflict" description="In Ref. 2; CAA58766/AAA92122." evidence="8" ref="2">
    <original>R</original>
    <variation>W</variation>
    <location>
        <position position="97"/>
    </location>
</feature>
<reference key="1">
    <citation type="submission" date="1995-01" db="EMBL/GenBank/DDBJ databases">
        <authorList>
            <person name="Alliod C."/>
            <person name="Ballivet M."/>
        </authorList>
    </citation>
    <scope>NUCLEOTIDE SEQUENCE [MRNA]</scope>
    <source>
        <strain>White leghorn</strain>
    </source>
</reference>
<reference key="2">
    <citation type="journal article" date="1997" name="Mol. Pharmacol.">
        <title>'Orphan' alpha6 nicotinic AChR subunit can form a functional heteromeric acetylcholine receptor.</title>
        <authorList>
            <person name="Gerzanich V."/>
            <person name="Kuryatov A."/>
            <person name="Anand R."/>
            <person name="Lindstrom J."/>
        </authorList>
    </citation>
    <scope>NUCLEOTIDE SEQUENCE [MRNA]</scope>
    <scope>FUNCTION</scope>
    <scope>CATALYTIC ACTIVITY</scope>
    <scope>ACTIVITY REGULATION</scope>
    <scope>SUBUNIT</scope>
</reference>
<dbReference type="EMBL" id="X83889">
    <property type="protein sequence ID" value="CAA58766.1"/>
    <property type="molecule type" value="mRNA"/>
</dbReference>
<dbReference type="EMBL" id="U48860">
    <property type="protein sequence ID" value="AAA92122.1"/>
    <property type="molecule type" value="mRNA"/>
</dbReference>
<dbReference type="PIR" id="T09289">
    <property type="entry name" value="T09289"/>
</dbReference>
<dbReference type="RefSeq" id="NP_990695.1">
    <property type="nucleotide sequence ID" value="NM_205364.1"/>
</dbReference>
<dbReference type="SMR" id="P49581"/>
<dbReference type="ComplexPortal" id="CPX-201">
    <property type="entry name" value="Neuronal nicotinic acetylcholine receptor complex, alpha3-alpha6-beta2-beta3"/>
</dbReference>
<dbReference type="ComplexPortal" id="CPX-214">
    <property type="entry name" value="Neuronal nicotinic acetylcholine receptor complex, alpha3-alpha6-beta4"/>
</dbReference>
<dbReference type="FunCoup" id="P49581">
    <property type="interactions" value="41"/>
</dbReference>
<dbReference type="STRING" id="9031.ENSGALP00000036997"/>
<dbReference type="BindingDB" id="P49581"/>
<dbReference type="GlyCosmos" id="P49581">
    <property type="glycosylation" value="2 sites, No reported glycans"/>
</dbReference>
<dbReference type="GlyGen" id="P49581">
    <property type="glycosylation" value="2 sites"/>
</dbReference>
<dbReference type="PaxDb" id="9031-ENSGALP00000036997"/>
<dbReference type="GeneID" id="396321"/>
<dbReference type="KEGG" id="gga:396321"/>
<dbReference type="CTD" id="8973"/>
<dbReference type="VEuPathDB" id="HostDB:geneid_396321"/>
<dbReference type="eggNOG" id="KOG3645">
    <property type="taxonomic scope" value="Eukaryota"/>
</dbReference>
<dbReference type="InParanoid" id="P49581"/>
<dbReference type="OrthoDB" id="5975154at2759"/>
<dbReference type="PhylomeDB" id="P49581"/>
<dbReference type="PRO" id="PR:P49581"/>
<dbReference type="Proteomes" id="UP000000539">
    <property type="component" value="Unassembled WGS sequence"/>
</dbReference>
<dbReference type="GO" id="GO:0005892">
    <property type="term" value="C:acetylcholine-gated channel complex"/>
    <property type="evidence" value="ECO:0000318"/>
    <property type="project" value="GO_Central"/>
</dbReference>
<dbReference type="GO" id="GO:0098691">
    <property type="term" value="C:dopaminergic synapse"/>
    <property type="evidence" value="ECO:0000250"/>
    <property type="project" value="UniProtKB"/>
</dbReference>
<dbReference type="GO" id="GO:0043005">
    <property type="term" value="C:neuron projection"/>
    <property type="evidence" value="ECO:0000318"/>
    <property type="project" value="GO_Central"/>
</dbReference>
<dbReference type="GO" id="GO:0005886">
    <property type="term" value="C:plasma membrane"/>
    <property type="evidence" value="ECO:0000318"/>
    <property type="project" value="GO_Central"/>
</dbReference>
<dbReference type="GO" id="GO:0045211">
    <property type="term" value="C:postsynaptic membrane"/>
    <property type="evidence" value="ECO:0007669"/>
    <property type="project" value="UniProtKB-KW"/>
</dbReference>
<dbReference type="GO" id="GO:0042734">
    <property type="term" value="C:presynaptic membrane"/>
    <property type="evidence" value="ECO:0000250"/>
    <property type="project" value="UniProtKB"/>
</dbReference>
<dbReference type="GO" id="GO:0045202">
    <property type="term" value="C:synapse"/>
    <property type="evidence" value="ECO:0000318"/>
    <property type="project" value="GO_Central"/>
</dbReference>
<dbReference type="GO" id="GO:0022848">
    <property type="term" value="F:acetylcholine-gated monoatomic cation-selective channel activity"/>
    <property type="evidence" value="ECO:0000250"/>
    <property type="project" value="UniProtKB"/>
</dbReference>
<dbReference type="GO" id="GO:0004888">
    <property type="term" value="F:transmembrane signaling receptor activity"/>
    <property type="evidence" value="ECO:0007669"/>
    <property type="project" value="InterPro"/>
</dbReference>
<dbReference type="GO" id="GO:0095500">
    <property type="term" value="P:acetylcholine receptor signaling pathway"/>
    <property type="evidence" value="ECO:0000318"/>
    <property type="project" value="GO_Central"/>
</dbReference>
<dbReference type="GO" id="GO:0035095">
    <property type="term" value="P:behavioral response to nicotine"/>
    <property type="evidence" value="ECO:0000250"/>
    <property type="project" value="UniProtKB"/>
</dbReference>
<dbReference type="GO" id="GO:0051899">
    <property type="term" value="P:membrane depolarization"/>
    <property type="evidence" value="ECO:0000318"/>
    <property type="project" value="GO_Central"/>
</dbReference>
<dbReference type="GO" id="GO:0034220">
    <property type="term" value="P:monoatomic ion transmembrane transport"/>
    <property type="evidence" value="ECO:0000318"/>
    <property type="project" value="GO_Central"/>
</dbReference>
<dbReference type="GO" id="GO:0007274">
    <property type="term" value="P:neuromuscular synaptic transmission"/>
    <property type="evidence" value="ECO:0000318"/>
    <property type="project" value="GO_Central"/>
</dbReference>
<dbReference type="GO" id="GO:0014059">
    <property type="term" value="P:regulation of dopamine secretion"/>
    <property type="evidence" value="ECO:0000250"/>
    <property type="project" value="UniProtKB"/>
</dbReference>
<dbReference type="GO" id="GO:0035094">
    <property type="term" value="P:response to nicotine"/>
    <property type="evidence" value="ECO:0000318"/>
    <property type="project" value="GO_Central"/>
</dbReference>
<dbReference type="GO" id="GO:0007271">
    <property type="term" value="P:synaptic transmission, cholinergic"/>
    <property type="evidence" value="ECO:0000318"/>
    <property type="project" value="GO_Central"/>
</dbReference>
<dbReference type="CDD" id="cd19064">
    <property type="entry name" value="LGIC_TM_nAChR"/>
    <property type="match status" value="1"/>
</dbReference>
<dbReference type="FunFam" id="2.70.170.10:FF:000008">
    <property type="entry name" value="Cholinergic receptor nicotinic alpha 6 subunit"/>
    <property type="match status" value="1"/>
</dbReference>
<dbReference type="FunFam" id="1.20.58.390:FF:000017">
    <property type="entry name" value="Neuronal acetylcholine receptor subunit alpha-3"/>
    <property type="match status" value="1"/>
</dbReference>
<dbReference type="FunFam" id="1.20.58.390:FF:000001">
    <property type="entry name" value="Neuronal nicotinic acetylcholine receptor subunit 3"/>
    <property type="match status" value="1"/>
</dbReference>
<dbReference type="Gene3D" id="2.70.170.10">
    <property type="entry name" value="Neurotransmitter-gated ion-channel ligand-binding domain"/>
    <property type="match status" value="1"/>
</dbReference>
<dbReference type="Gene3D" id="1.20.58.390">
    <property type="entry name" value="Neurotransmitter-gated ion-channel transmembrane domain"/>
    <property type="match status" value="2"/>
</dbReference>
<dbReference type="InterPro" id="IPR006202">
    <property type="entry name" value="Neur_chan_lig-bd"/>
</dbReference>
<dbReference type="InterPro" id="IPR036734">
    <property type="entry name" value="Neur_chan_lig-bd_sf"/>
</dbReference>
<dbReference type="InterPro" id="IPR006201">
    <property type="entry name" value="Neur_channel"/>
</dbReference>
<dbReference type="InterPro" id="IPR036719">
    <property type="entry name" value="Neuro-gated_channel_TM_sf"/>
</dbReference>
<dbReference type="InterPro" id="IPR038050">
    <property type="entry name" value="Neuro_actylchol_rec"/>
</dbReference>
<dbReference type="InterPro" id="IPR006029">
    <property type="entry name" value="Neurotrans-gated_channel_TM"/>
</dbReference>
<dbReference type="InterPro" id="IPR018000">
    <property type="entry name" value="Neurotransmitter_ion_chnl_CS"/>
</dbReference>
<dbReference type="InterPro" id="IPR002394">
    <property type="entry name" value="Nicotinic_acetylcholine_rcpt"/>
</dbReference>
<dbReference type="NCBIfam" id="TIGR00860">
    <property type="entry name" value="LIC"/>
    <property type="match status" value="1"/>
</dbReference>
<dbReference type="PANTHER" id="PTHR18945">
    <property type="entry name" value="NEUROTRANSMITTER GATED ION CHANNEL"/>
    <property type="match status" value="1"/>
</dbReference>
<dbReference type="Pfam" id="PF02931">
    <property type="entry name" value="Neur_chan_LBD"/>
    <property type="match status" value="1"/>
</dbReference>
<dbReference type="Pfam" id="PF02932">
    <property type="entry name" value="Neur_chan_memb"/>
    <property type="match status" value="1"/>
</dbReference>
<dbReference type="PRINTS" id="PR00254">
    <property type="entry name" value="NICOTINICR"/>
</dbReference>
<dbReference type="PRINTS" id="PR00252">
    <property type="entry name" value="NRIONCHANNEL"/>
</dbReference>
<dbReference type="SUPFAM" id="SSF90112">
    <property type="entry name" value="Neurotransmitter-gated ion-channel transmembrane pore"/>
    <property type="match status" value="1"/>
</dbReference>
<dbReference type="SUPFAM" id="SSF63712">
    <property type="entry name" value="Nicotinic receptor ligand binding domain-like"/>
    <property type="match status" value="1"/>
</dbReference>
<dbReference type="PROSITE" id="PS00236">
    <property type="entry name" value="NEUROTR_ION_CHANNEL"/>
    <property type="match status" value="1"/>
</dbReference>
<proteinExistence type="evidence at protein level"/>
<keyword id="KW-1003">Cell membrane</keyword>
<keyword id="KW-1015">Disulfide bond</keyword>
<keyword id="KW-0325">Glycoprotein</keyword>
<keyword id="KW-0407">Ion channel</keyword>
<keyword id="KW-0406">Ion transport</keyword>
<keyword id="KW-1071">Ligand-gated ion channel</keyword>
<keyword id="KW-0472">Membrane</keyword>
<keyword id="KW-0675">Receptor</keyword>
<keyword id="KW-1185">Reference proteome</keyword>
<keyword id="KW-0732">Signal</keyword>
<keyword id="KW-0770">Synapse</keyword>
<keyword id="KW-0812">Transmembrane</keyword>
<keyword id="KW-1133">Transmembrane helix</keyword>
<keyword id="KW-0813">Transport</keyword>
<protein>
    <recommendedName>
        <fullName>Neuronal acetylcholine receptor subunit alpha-6</fullName>
    </recommendedName>
</protein>
<organism>
    <name type="scientific">Gallus gallus</name>
    <name type="common">Chicken</name>
    <dbReference type="NCBI Taxonomy" id="9031"/>
    <lineage>
        <taxon>Eukaryota</taxon>
        <taxon>Metazoa</taxon>
        <taxon>Chordata</taxon>
        <taxon>Craniata</taxon>
        <taxon>Vertebrata</taxon>
        <taxon>Euteleostomi</taxon>
        <taxon>Archelosauria</taxon>
        <taxon>Archosauria</taxon>
        <taxon>Dinosauria</taxon>
        <taxon>Saurischia</taxon>
        <taxon>Theropoda</taxon>
        <taxon>Coelurosauria</taxon>
        <taxon>Aves</taxon>
        <taxon>Neognathae</taxon>
        <taxon>Galloanserae</taxon>
        <taxon>Galliformes</taxon>
        <taxon>Phasianidae</taxon>
        <taxon>Phasianinae</taxon>
        <taxon>Gallus</taxon>
    </lineage>
</organism>
<name>ACHA6_CHICK</name>
<evidence type="ECO:0000250" key="1"/>
<evidence type="ECO:0000250" key="2">
    <source>
        <dbReference type="UniProtKB" id="P02709"/>
    </source>
</evidence>
<evidence type="ECO:0000250" key="3">
    <source>
        <dbReference type="UniProtKB" id="Q15825"/>
    </source>
</evidence>
<evidence type="ECO:0000250" key="4">
    <source>
        <dbReference type="UniProtKB" id="Q9R0W9"/>
    </source>
</evidence>
<evidence type="ECO:0000255" key="5"/>
<evidence type="ECO:0000256" key="6">
    <source>
        <dbReference type="SAM" id="MobiDB-lite"/>
    </source>
</evidence>
<evidence type="ECO:0000269" key="7">
    <source>
    </source>
</evidence>
<evidence type="ECO:0000305" key="8"/>
<comment type="function">
    <text evidence="4 7">Component of neuronal acetylcholine receptors (nAChRs) that function as pentameric, ligand-gated cation channels with high calcium permeability among other activities. nAChRs are excitatory neurotrasnmitter receptors formed by a collection of nAChR subunits known to mediate synaptic transmission in the nervous system and the neuromuscular junction. Each nAchR subunit confers differential attributes to channel properties, including activation, deactivation and desensitization kinetics, pH sensitivity, cation permeability, and binding to allosteric modulators. CHRNA6 forms pentameric channels with CHRNB2 and CHRNA4 that exhibit high sensitivity to ACh and nicotine and are predominantly expressed in only a few brain areas, including dopaminergic neurons, norepirephrine neurons and cells of the visual system (PubMed:9203638). nAChrs containing CHRNA6 subunits mediate endogenous cholinergic modulation of dopamine and gamma-aminobutyric acid (GABA) release in response to nicotine at nerve terminals (By similarity).</text>
</comment>
<comment type="function">
    <text evidence="3 4 7">Component of neuronal acetylcholine receptors (nAChRs) that function as pentameric, ligand-gated cation channels with high calcium permeability among other activities. nAChRs are excitatory neurotrasnmitter receptors formed by a collection of nAChR subunits known to mediate synaptic transmission in the nervous system and the neuromuscular junction. Each nAchR subunit confers differential attributes to channel properties, including activation, deactivation and desensitization kinetics, pH sensitivity, cation permeability, and binding to allosteric modulators. CHRNA6 forms pentameric channels with CHRNB2, CHRNB3 and CHRNA4 that exhibit high sensitivity to ACh and nicotine and are predominantly expressed in only a few brain areas, including dopaminergic neurons, norepirephrine neurons and cells of the visual system (PubMed:9203638). nAChrs containing CHRNA6 subunits mediate endogenous cholinergic modulation of dopamine and gamma-aminobutyric acid (GABA) release in response to nicotine at nerve terminals.</text>
</comment>
<comment type="catalytic activity">
    <reaction evidence="2">
        <text>K(+)(in) = K(+)(out)</text>
        <dbReference type="Rhea" id="RHEA:29463"/>
        <dbReference type="ChEBI" id="CHEBI:29103"/>
    </reaction>
</comment>
<comment type="catalytic activity">
    <reaction evidence="2">
        <text>Na(+)(in) = Na(+)(out)</text>
        <dbReference type="Rhea" id="RHEA:34963"/>
        <dbReference type="ChEBI" id="CHEBI:29101"/>
    </reaction>
</comment>
<comment type="catalytic activity">
    <reaction evidence="7">
        <text>Ca(2+)(in) = Ca(2+)(out)</text>
        <dbReference type="Rhea" id="RHEA:29671"/>
        <dbReference type="ChEBI" id="CHEBI:29108"/>
    </reaction>
</comment>
<comment type="activity regulation">
    <text evidence="4 7">Activated by a myriad of ligands such as acetylcholine, cytisine and nicotine (PubMed:9203638). CHRNA6 nAChR activity is inhibited by the antagonists alpha-conotoxin MII and PIA, a small disulfide-constrained peptides from cone snails (By similarity).</text>
</comment>
<comment type="subunit">
    <text evidence="3 4 7">Neuronal AChR is composed of two different types of subunits: alpha and non-alpha (beta). CHRNA6/alpha-6 subunit can be combined to CHRNB2/beta-2, CHRNA4/alpha-4 and CHRNB3/beta-3 to give rise to functional receptors (PubMed:9203638). Heteropentamers containing CHRNB3 have an stoichiometry of (CHRNA6:CHRNB2)2:CHRNB3. Interacts with LYPD6.</text>
</comment>
<comment type="subcellular location">
    <subcellularLocation>
        <location evidence="4">Synaptic cell membrane</location>
        <topology evidence="5">Multi-pass membrane protein</topology>
    </subcellularLocation>
</comment>
<comment type="similarity">
    <text evidence="8">Belongs to the ligand-gated ion channel (TC 1.A.9) family. Acetylcholine receptor (TC 1.A.9.1) subfamily. Alpha-6/CHRNA6 sub-subfamily.</text>
</comment>
<accession>P49581</accession>
<accession>Q90709</accession>
<sequence>MHPKRRLCWCLPASGAWAFMLTSLIADTTACESEERLFHKLFSRYNQFIRPVENVSDPVTVHFELAITQLTNVDEVNQIMETNLWLRHIWNDYKLRRDPREYDGIEFVRVPADKIWKPDIVLYNNAVGDFQVEGKTKALLRYDGMITWTPPAIFKSSCPMDITFFPFDHQNCSLKFGSWTYDKAKIDLLIIGSKVDMNEFWENSEWEIVDASGYKHDIKYNCCEEIYTDITYSFYIRRLPMFYTINLIIPCLFISFLTVLVFYLPSDCGEKVTLCISVLLSLTVFLLVITETIPSTSLVIPLVGEYLLFTMIFVTLSIVITVFVLNIHYRTPTTHTMPKWVKTVFLSLLPKVLLMQRPLEQEKKNISKKTKKGSAKTSGKSKHSKHKDNKLHKEQRCCHCDKADDLTSTRRSRLSHQSLKWMAEHTEYSPEVKDVINNVQFIAENMKSQNETKEVEDDWKYVAMVIDRVFLWVFIILCVFGTAGLFIQPLIADT</sequence>